<proteinExistence type="inferred from homology"/>
<accession>B4TK64</accession>
<evidence type="ECO:0000255" key="1">
    <source>
        <dbReference type="HAMAP-Rule" id="MF_01161"/>
    </source>
</evidence>
<feature type="chain" id="PRO_1000164329" description="tRNA(Ile)-lysidine synthase">
    <location>
        <begin position="1"/>
        <end position="430"/>
    </location>
</feature>
<feature type="binding site" evidence="1">
    <location>
        <begin position="21"/>
        <end position="26"/>
    </location>
    <ligand>
        <name>ATP</name>
        <dbReference type="ChEBI" id="CHEBI:30616"/>
    </ligand>
</feature>
<organism>
    <name type="scientific">Salmonella heidelberg (strain SL476)</name>
    <dbReference type="NCBI Taxonomy" id="454169"/>
    <lineage>
        <taxon>Bacteria</taxon>
        <taxon>Pseudomonadati</taxon>
        <taxon>Pseudomonadota</taxon>
        <taxon>Gammaproteobacteria</taxon>
        <taxon>Enterobacterales</taxon>
        <taxon>Enterobacteriaceae</taxon>
        <taxon>Salmonella</taxon>
    </lineage>
</organism>
<sequence length="430" mass="48367">MTTLTLNTSLLSSCRILAAFSGGLDSTVLLHQLVLWRERHPDVTLRAIHIHHGLSPHADSWVRHCETVCERWQVPLVVERVTLADNGLGIEAHAREARYRAFAQTLLPGEVLATAQHLDDQCETFLLALKRGSGPAGLSAMGECSPFAGTLLLRPLLRETRKTLEQWAVRHGLCWIEDESNQDDAYDRNFLRLRALPLLQQRWPHFPAAVARSATLCAEQERLLDELLASDLTDCITAEGTLRLSPLMLMSDVRRAAILRRWLAMRNAPMPSRDALERIWQEVALARDDASPCLRFGDHEIRRYQSQLWWIKTVAGQHETTVVWPVWQTPLALPAGLGTVQLVPGGELRRPREEESVSIRFKAPGVLHIVGRNGGRKLKKIWQEQGIPPWRRDTTPLLFYGETLIAAAGVFVTREGAAEDKEGVSLVWHA</sequence>
<gene>
    <name evidence="1" type="primary">tilS</name>
    <name type="ordered locus">SeHA_C0274</name>
</gene>
<keyword id="KW-0067">ATP-binding</keyword>
<keyword id="KW-0963">Cytoplasm</keyword>
<keyword id="KW-0436">Ligase</keyword>
<keyword id="KW-0547">Nucleotide-binding</keyword>
<keyword id="KW-0819">tRNA processing</keyword>
<comment type="function">
    <text evidence="1">Ligates lysine onto the cytidine present at position 34 of the AUA codon-specific tRNA(Ile) that contains the anticodon CAU, in an ATP-dependent manner. Cytidine is converted to lysidine, thus changing the amino acid specificity of the tRNA from methionine to isoleucine.</text>
</comment>
<comment type="catalytic activity">
    <reaction evidence="1">
        <text>cytidine(34) in tRNA(Ile2) + L-lysine + ATP = lysidine(34) in tRNA(Ile2) + AMP + diphosphate + H(+)</text>
        <dbReference type="Rhea" id="RHEA:43744"/>
        <dbReference type="Rhea" id="RHEA-COMP:10625"/>
        <dbReference type="Rhea" id="RHEA-COMP:10670"/>
        <dbReference type="ChEBI" id="CHEBI:15378"/>
        <dbReference type="ChEBI" id="CHEBI:30616"/>
        <dbReference type="ChEBI" id="CHEBI:32551"/>
        <dbReference type="ChEBI" id="CHEBI:33019"/>
        <dbReference type="ChEBI" id="CHEBI:82748"/>
        <dbReference type="ChEBI" id="CHEBI:83665"/>
        <dbReference type="ChEBI" id="CHEBI:456215"/>
        <dbReference type="EC" id="6.3.4.19"/>
    </reaction>
</comment>
<comment type="subcellular location">
    <subcellularLocation>
        <location evidence="1">Cytoplasm</location>
    </subcellularLocation>
</comment>
<comment type="domain">
    <text>The N-terminal region contains the highly conserved SGGXDS motif, predicted to be a P-loop motif involved in ATP binding.</text>
</comment>
<comment type="similarity">
    <text evidence="1">Belongs to the tRNA(Ile)-lysidine synthase family.</text>
</comment>
<name>TILS_SALHS</name>
<reference key="1">
    <citation type="journal article" date="2011" name="J. Bacteriol.">
        <title>Comparative genomics of 28 Salmonella enterica isolates: evidence for CRISPR-mediated adaptive sublineage evolution.</title>
        <authorList>
            <person name="Fricke W.F."/>
            <person name="Mammel M.K."/>
            <person name="McDermott P.F."/>
            <person name="Tartera C."/>
            <person name="White D.G."/>
            <person name="Leclerc J.E."/>
            <person name="Ravel J."/>
            <person name="Cebula T.A."/>
        </authorList>
    </citation>
    <scope>NUCLEOTIDE SEQUENCE [LARGE SCALE GENOMIC DNA]</scope>
    <source>
        <strain>SL476</strain>
    </source>
</reference>
<protein>
    <recommendedName>
        <fullName evidence="1">tRNA(Ile)-lysidine synthase</fullName>
        <ecNumber evidence="1">6.3.4.19</ecNumber>
    </recommendedName>
    <alternativeName>
        <fullName evidence="1">tRNA(Ile)-2-lysyl-cytidine synthase</fullName>
    </alternativeName>
    <alternativeName>
        <fullName evidence="1">tRNA(Ile)-lysidine synthetase</fullName>
    </alternativeName>
</protein>
<dbReference type="EC" id="6.3.4.19" evidence="1"/>
<dbReference type="EMBL" id="CP001120">
    <property type="protein sequence ID" value="ACF65993.1"/>
    <property type="molecule type" value="Genomic_DNA"/>
</dbReference>
<dbReference type="RefSeq" id="WP_000210036.1">
    <property type="nucleotide sequence ID" value="NC_011083.1"/>
</dbReference>
<dbReference type="SMR" id="B4TK64"/>
<dbReference type="KEGG" id="seh:SeHA_C0274"/>
<dbReference type="HOGENOM" id="CLU_018869_2_0_6"/>
<dbReference type="Proteomes" id="UP000001866">
    <property type="component" value="Chromosome"/>
</dbReference>
<dbReference type="GO" id="GO:0005737">
    <property type="term" value="C:cytoplasm"/>
    <property type="evidence" value="ECO:0007669"/>
    <property type="project" value="UniProtKB-SubCell"/>
</dbReference>
<dbReference type="GO" id="GO:0005524">
    <property type="term" value="F:ATP binding"/>
    <property type="evidence" value="ECO:0007669"/>
    <property type="project" value="UniProtKB-UniRule"/>
</dbReference>
<dbReference type="GO" id="GO:0032267">
    <property type="term" value="F:tRNA(Ile)-lysidine synthase activity"/>
    <property type="evidence" value="ECO:0007669"/>
    <property type="project" value="UniProtKB-EC"/>
</dbReference>
<dbReference type="GO" id="GO:0006400">
    <property type="term" value="P:tRNA modification"/>
    <property type="evidence" value="ECO:0007669"/>
    <property type="project" value="UniProtKB-UniRule"/>
</dbReference>
<dbReference type="CDD" id="cd01992">
    <property type="entry name" value="TilS_N"/>
    <property type="match status" value="1"/>
</dbReference>
<dbReference type="FunFam" id="3.40.50.620:FF:000173">
    <property type="entry name" value="tRNA(Ile)-lysidine synthase"/>
    <property type="match status" value="1"/>
</dbReference>
<dbReference type="Gene3D" id="1.20.59.20">
    <property type="match status" value="1"/>
</dbReference>
<dbReference type="Gene3D" id="3.40.50.620">
    <property type="entry name" value="HUPs"/>
    <property type="match status" value="1"/>
</dbReference>
<dbReference type="HAMAP" id="MF_01161">
    <property type="entry name" value="tRNA_Ile_lys_synt"/>
    <property type="match status" value="1"/>
</dbReference>
<dbReference type="InterPro" id="IPR012796">
    <property type="entry name" value="Lysidine-tRNA-synth_C"/>
</dbReference>
<dbReference type="InterPro" id="IPR014729">
    <property type="entry name" value="Rossmann-like_a/b/a_fold"/>
</dbReference>
<dbReference type="InterPro" id="IPR011063">
    <property type="entry name" value="TilS/TtcA_N"/>
</dbReference>
<dbReference type="InterPro" id="IPR012094">
    <property type="entry name" value="tRNA_Ile_lys_synt"/>
</dbReference>
<dbReference type="InterPro" id="IPR012795">
    <property type="entry name" value="tRNA_Ile_lys_synt_N"/>
</dbReference>
<dbReference type="InterPro" id="IPR015262">
    <property type="entry name" value="tRNA_Ile_lys_synt_subst-bd"/>
</dbReference>
<dbReference type="NCBIfam" id="TIGR02433">
    <property type="entry name" value="lysidine_TilS_C"/>
    <property type="match status" value="1"/>
</dbReference>
<dbReference type="NCBIfam" id="TIGR02432">
    <property type="entry name" value="lysidine_TilS_N"/>
    <property type="match status" value="1"/>
</dbReference>
<dbReference type="NCBIfam" id="NF007942">
    <property type="entry name" value="PRK10660.1"/>
    <property type="match status" value="1"/>
</dbReference>
<dbReference type="PANTHER" id="PTHR43033">
    <property type="entry name" value="TRNA(ILE)-LYSIDINE SYNTHASE-RELATED"/>
    <property type="match status" value="1"/>
</dbReference>
<dbReference type="PANTHER" id="PTHR43033:SF1">
    <property type="entry name" value="TRNA(ILE)-LYSIDINE SYNTHASE-RELATED"/>
    <property type="match status" value="1"/>
</dbReference>
<dbReference type="Pfam" id="PF01171">
    <property type="entry name" value="ATP_bind_3"/>
    <property type="match status" value="1"/>
</dbReference>
<dbReference type="Pfam" id="PF09179">
    <property type="entry name" value="TilS"/>
    <property type="match status" value="1"/>
</dbReference>
<dbReference type="Pfam" id="PF11734">
    <property type="entry name" value="TilS_C"/>
    <property type="match status" value="1"/>
</dbReference>
<dbReference type="SMART" id="SM00977">
    <property type="entry name" value="TilS_C"/>
    <property type="match status" value="1"/>
</dbReference>
<dbReference type="SUPFAM" id="SSF52402">
    <property type="entry name" value="Adenine nucleotide alpha hydrolases-like"/>
    <property type="match status" value="1"/>
</dbReference>
<dbReference type="SUPFAM" id="SSF82829">
    <property type="entry name" value="MesJ substrate recognition domain-like"/>
    <property type="match status" value="1"/>
</dbReference>
<dbReference type="SUPFAM" id="SSF56037">
    <property type="entry name" value="PheT/TilS domain"/>
    <property type="match status" value="1"/>
</dbReference>